<name>PGLZ_ECOHS</name>
<feature type="chain" id="PRO_0000452167" description="Alkaline phosphatase-like protein BrxZ">
    <location>
        <begin position="1"/>
        <end position="865"/>
    </location>
</feature>
<proteinExistence type="evidence at protein level"/>
<sequence>MQNQDFIAGLKAKFAEHRIVFWHDPDKRFIEELEQLKLENVTLINMTHASQLAVKKRIEMDEPEQQFLLWFPHDAPPHEQDWLLDIRLYSSEFHADFAAITLNTLGIPQLGLREHIQRRKAFFSTKRTQALKNLVTEQEDETSLDKKMIAVIAGAKTAKTEDILFNLITQYVNQQTEDDSELENTQAMLKRHGLDPVLWEMLNHEMGYQAEEPSLENLLLKLFCTDLSAQADRQQRAWLEKNVLLTPSGRASALAFMVTWRADRRYKEAYDYCAQQMQAALRPEDHYRLSSPYDLHECETTLSIEQTIIHALVTQLLEESTTLDREAFKKLLSERQSKYWCQTQPEYYAIYDALRQAERLLNLRNRHIDGFHYQDSATFWKAYCEELFRFDQAYRLFNEYALLVHSKGAMILKSLDDYIEALYSNWYLAELSRNWNEVLEAENRMQAWQIPGVPRQKNFFNEVVKPQFQNPQIKRVFVIISDALRYEVAEELGNQINTEKRFTAELRSQLGVLPSYTQLGMAALLPHEQLCYQPSNGDIVYADGLSTSGIPNRDTILKNYKGMAIKSKDLLELKNQEGRDLIRDYEVVYIWHNTIDATGDTASTEDKTFEACRTAVTELKDLVTKVINRLHGTRIFVTADHGFLFQQQALSVQDKTTLQIKPENTIKNHKRFIIGHQLPADDFCWKGKVADTAGVSDNSEFLIPKGIQRFHFSGGARFVHGGTMLQEVCVPVLQIKALQKTAAEKQPQRRPVDIVAYHPMIKLVNNIDKVSLLQTHPVGELYEPRILNIYIVDNANNVVSGKERISFDSDNSTMEKRVREVTLKLIGANFNRRNEYWLILEDAQTETGYQKYPVIIDLAFQDDFF</sequence>
<dbReference type="EMBL" id="CP000802">
    <property type="protein sequence ID" value="ABV04728.1"/>
    <property type="molecule type" value="Genomic_DNA"/>
</dbReference>
<dbReference type="RefSeq" id="WP_001180887.1">
    <property type="nucleotide sequence ID" value="NC_009800.1"/>
</dbReference>
<dbReference type="KEGG" id="ecx:EcHS_A0340"/>
<dbReference type="GO" id="GO:0051607">
    <property type="term" value="P:defense response to virus"/>
    <property type="evidence" value="ECO:0007669"/>
    <property type="project" value="UniProtKB-KW"/>
</dbReference>
<dbReference type="InterPro" id="IPR017850">
    <property type="entry name" value="Alkaline_phosphatase_core_sf"/>
</dbReference>
<dbReference type="InterPro" id="IPR014060">
    <property type="entry name" value="PglZ"/>
</dbReference>
<dbReference type="InterPro" id="IPR013973">
    <property type="entry name" value="PglZ_dom"/>
</dbReference>
<dbReference type="NCBIfam" id="TIGR02687">
    <property type="entry name" value="BREX-1 system phosphatase PglZ type A"/>
    <property type="match status" value="1"/>
</dbReference>
<dbReference type="Pfam" id="PF08665">
    <property type="entry name" value="PglZ"/>
    <property type="match status" value="1"/>
</dbReference>
<dbReference type="SUPFAM" id="SSF53649">
    <property type="entry name" value="Alkaline phosphatase-like"/>
    <property type="match status" value="1"/>
</dbReference>
<comment type="function">
    <text evidence="1">BREX systems (bacteriophage exclusion) provide immunity against bacteriophage. Part of a type 1 BREX system which protects against dsDNA phage. This system allows phage adsorption but prevents phage DNA replication, without degradation of the phage DNA. Methylation of bacterial DNA by PglX guides self/non-self discrimination. When the brxA-brxB-brxC-pglX-pglZ-brxL genes are transformed into a susceptible E.coli strain (BW25113) they confer very high resistance to infection by bacteriophage VR7 and VpaE1, about 100-fold protection against lambda, T5 and T7 and no protection against RNA phage Qbeta, ssDNA phage M13 or dSDNA phage T4 and VR5. Glycosylated phage DNA is not susceptible to BREX. The BREX system does not confer resistance to lysogenic lambda phage, i.e. prophage that are integrated into the chromosomal DNA and then induced to form phage.</text>
</comment>
<comment type="induction">
    <text evidence="1">Transcribed at similar levels in lag and exponential phase, rises in stationary phase.</text>
</comment>
<comment type="disruption phenotype">
    <text evidence="1">No methylation of 5'-GGTAAG-3' in chromosomal DNA, BREX no longer confers phage resistance.</text>
</comment>
<comment type="similarity">
    <text evidence="3">Belongs to the alkaline phosphatase superfamily.</text>
</comment>
<organism>
    <name type="scientific">Escherichia coli O9:H4 (strain HS)</name>
    <dbReference type="NCBI Taxonomy" id="331112"/>
    <lineage>
        <taxon>Bacteria</taxon>
        <taxon>Pseudomonadati</taxon>
        <taxon>Pseudomonadota</taxon>
        <taxon>Gammaproteobacteria</taxon>
        <taxon>Enterobacterales</taxon>
        <taxon>Enterobacteriaceae</taxon>
        <taxon>Escherichia</taxon>
    </lineage>
</organism>
<protein>
    <recommendedName>
        <fullName evidence="2">Alkaline phosphatase-like protein BrxZ</fullName>
    </recommendedName>
    <alternativeName>
        <fullName evidence="3">BREX protein PglZ</fullName>
    </alternativeName>
</protein>
<evidence type="ECO:0000269" key="1">
    <source>
    </source>
</evidence>
<evidence type="ECO:0000303" key="2">
    <source>
    </source>
</evidence>
<evidence type="ECO:0000305" key="3"/>
<keyword id="KW-0051">Antiviral defense</keyword>
<gene>
    <name type="primary">pglZ</name>
    <name evidence="2" type="synonym">brxZ</name>
    <name type="ordered locus">EcHS_A0340</name>
</gene>
<accession>P0DUG0</accession>
<accession>A0A7M3S2P5</accession>
<reference key="1">
    <citation type="journal article" date="2008" name="J. Bacteriol.">
        <title>The pangenome structure of Escherichia coli: comparative genomic analysis of E. coli commensal and pathogenic isolates.</title>
        <authorList>
            <person name="Rasko D.A."/>
            <person name="Rosovitz M.J."/>
            <person name="Myers G.S.A."/>
            <person name="Mongodin E.F."/>
            <person name="Fricke W.F."/>
            <person name="Gajer P."/>
            <person name="Crabtree J."/>
            <person name="Sebaihia M."/>
            <person name="Thomson N.R."/>
            <person name="Chaudhuri R."/>
            <person name="Henderson I.R."/>
            <person name="Sperandio V."/>
            <person name="Ravel J."/>
        </authorList>
    </citation>
    <scope>NUCLEOTIDE SEQUENCE [LARGE SCALE GENOMIC DNA]</scope>
    <source>
        <strain>HS</strain>
    </source>
</reference>
<reference key="2">
    <citation type="journal article" date="2019" name="Nucleic Acids Res.">
        <title>BREX system of Escherichia coli distinguishes self from non-self by methylation of a specific DNA site.</title>
        <authorList>
            <person name="Gordeeva J."/>
            <person name="Morozova N."/>
            <person name="Sierro N."/>
            <person name="Isaev A."/>
            <person name="Sinkunas T."/>
            <person name="Tsvetkova K."/>
            <person name="Matlashov M."/>
            <person name="Truncaite L."/>
            <person name="Morgan R.D."/>
            <person name="Ivanov N.V."/>
            <person name="Siksnys V."/>
            <person name="Zeng L."/>
            <person name="Severinov K."/>
        </authorList>
    </citation>
    <scope>FUNCTION IN ANTIVIRAL DEFENSE</scope>
    <scope>INDUCTION</scope>
    <scope>DISRUPTION PHENOTYPE</scope>
    <source>
        <strain>HS</strain>
    </source>
</reference>